<keyword id="KW-1185">Reference proteome</keyword>
<accession>Q7Z6I5</accession>
<accession>A0AVA8</accession>
<accession>B2RMW1</accession>
<comment type="interaction">
    <interactant intactId="EBI-10696971">
        <id>Q7Z6I5</id>
    </interactant>
    <interactant intactId="EBI-640741">
        <id>P01023</id>
        <label>A2M</label>
    </interactant>
    <organismsDiffer>false</organismsDiffer>
    <experiments>3</experiments>
</comment>
<comment type="interaction">
    <interactant intactId="EBI-10696971">
        <id>Q7Z6I5</id>
    </interactant>
    <interactant intactId="EBI-11954519">
        <id>Q49AR9</id>
        <label>ANKS1A</label>
    </interactant>
    <organismsDiffer>false</organismsDiffer>
    <experiments>3</experiments>
</comment>
<comment type="interaction">
    <interactant intactId="EBI-10696971">
        <id>Q7Z6I5</id>
    </interactant>
    <interactant intactId="EBI-21535880">
        <id>Q92870-2</id>
        <label>APBB2</label>
    </interactant>
    <organismsDiffer>false</organismsDiffer>
    <experiments>3</experiments>
</comment>
<comment type="interaction">
    <interactant intactId="EBI-10696971">
        <id>Q7Z6I5</id>
    </interactant>
    <interactant intactId="EBI-10988864">
        <id>P46379-2</id>
        <label>BAG6</label>
    </interactant>
    <organismsDiffer>false</organismsDiffer>
    <experiments>3</experiments>
</comment>
<comment type="interaction">
    <interactant intactId="EBI-10696971">
        <id>Q7Z6I5</id>
    </interactant>
    <interactant intactId="EBI-718729">
        <id>P55212</id>
        <label>CASP6</label>
    </interactant>
    <organismsDiffer>false</organismsDiffer>
    <experiments>3</experiments>
</comment>
<comment type="interaction">
    <interactant intactId="EBI-10696971">
        <id>Q7Z6I5</id>
    </interactant>
    <interactant intactId="EBI-25837549">
        <id>P28329-3</id>
        <label>CHAT</label>
    </interactant>
    <organismsDiffer>false</organismsDiffer>
    <experiments>3</experiments>
</comment>
<comment type="interaction">
    <interactant intactId="EBI-10696971">
        <id>Q7Z6I5</id>
    </interactant>
    <interactant intactId="EBI-14151404">
        <id>Q96AQ7</id>
        <label>CIDEC</label>
    </interactant>
    <organismsDiffer>false</organismsDiffer>
    <experiments>3</experiments>
</comment>
<comment type="interaction">
    <interactant intactId="EBI-10696971">
        <id>Q7Z6I5</id>
    </interactant>
    <interactant intactId="EBI-10192698">
        <id>Q02930-3</id>
        <label>CREB5</label>
    </interactant>
    <organismsDiffer>false</organismsDiffer>
    <experiments>3</experiments>
</comment>
<comment type="interaction">
    <interactant intactId="EBI-10696971">
        <id>Q7Z6I5</id>
    </interactant>
    <interactant intactId="EBI-12593112">
        <id>O75190-2</id>
        <label>DNAJB6</label>
    </interactant>
    <organismsDiffer>false</organismsDiffer>
    <experiments>3</experiments>
</comment>
<comment type="interaction">
    <interactant intactId="EBI-10696971">
        <id>Q7Z6I5</id>
    </interactant>
    <interactant intactId="EBI-395638">
        <id>O14645</id>
        <label>DNALI1</label>
    </interactant>
    <organismsDiffer>false</organismsDiffer>
    <experiments>3</experiments>
</comment>
<comment type="interaction">
    <interactant intactId="EBI-10696971">
        <id>Q7Z6I5</id>
    </interactant>
    <interactant intactId="EBI-10968534">
        <id>P50570-2</id>
        <label>DNM2</label>
    </interactant>
    <organismsDiffer>false</organismsDiffer>
    <experiments>3</experiments>
</comment>
<comment type="interaction">
    <interactant intactId="EBI-10696971">
        <id>Q7Z6I5</id>
    </interactant>
    <interactant intactId="EBI-1054228">
        <id>P41091</id>
        <label>EIF2S3</label>
    </interactant>
    <organismsDiffer>false</organismsDiffer>
    <experiments>3</experiments>
</comment>
<comment type="interaction">
    <interactant intactId="EBI-10696971">
        <id>Q7Z6I5</id>
    </interactant>
    <interactant intactId="EBI-348399">
        <id>P22607</id>
        <label>FGFR3</label>
    </interactant>
    <organismsDiffer>false</organismsDiffer>
    <experiments>3</experiments>
</comment>
<comment type="interaction">
    <interactant intactId="EBI-10696971">
        <id>Q7Z6I5</id>
    </interactant>
    <interactant intactId="EBI-10226858">
        <id>Q0VDC6</id>
        <label>FKBP1A</label>
    </interactant>
    <organismsDiffer>false</organismsDiffer>
    <experiments>3</experiments>
</comment>
<comment type="interaction">
    <interactant intactId="EBI-10696971">
        <id>Q7Z6I5</id>
    </interactant>
    <interactant intactId="EBI-725515">
        <id>O43559</id>
        <label>FRS3</label>
    </interactant>
    <organismsDiffer>false</organismsDiffer>
    <experiments>3</experiments>
</comment>
<comment type="interaction">
    <interactant intactId="EBI-10696971">
        <id>Q7Z6I5</id>
    </interactant>
    <interactant intactId="EBI-11110431">
        <id>Q8TB36</id>
        <label>GDAP1</label>
    </interactant>
    <organismsDiffer>false</organismsDiffer>
    <experiments>3</experiments>
</comment>
<comment type="interaction">
    <interactant intactId="EBI-10696971">
        <id>Q7Z6I5</id>
    </interactant>
    <interactant intactId="EBI-351506">
        <id>P06396</id>
        <label>GSN</label>
    </interactant>
    <organismsDiffer>false</organismsDiffer>
    <experiments>3</experiments>
</comment>
<comment type="interaction">
    <interactant intactId="EBI-10696971">
        <id>Q7Z6I5</id>
    </interactant>
    <interactant intactId="EBI-740220">
        <id>O14964</id>
        <label>HGS</label>
    </interactant>
    <organismsDiffer>false</organismsDiffer>
    <experiments>3</experiments>
</comment>
<comment type="interaction">
    <interactant intactId="EBI-10696971">
        <id>Q7Z6I5</id>
    </interactant>
    <interactant intactId="EBI-740785">
        <id>P49639</id>
        <label>HOXA1</label>
    </interactant>
    <organismsDiffer>false</organismsDiffer>
    <experiments>3</experiments>
</comment>
<comment type="interaction">
    <interactant intactId="EBI-10696971">
        <id>Q7Z6I5</id>
    </interactant>
    <interactant intactId="EBI-356991">
        <id>P54652</id>
        <label>HSPA2</label>
    </interactant>
    <organismsDiffer>false</organismsDiffer>
    <experiments>3</experiments>
</comment>
<comment type="interaction">
    <interactant intactId="EBI-10696971">
        <id>Q7Z6I5</id>
    </interactant>
    <interactant intactId="EBI-466029">
        <id>P42858</id>
        <label>HTT</label>
    </interactant>
    <organismsDiffer>false</organismsDiffer>
    <experiments>3</experiments>
</comment>
<comment type="interaction">
    <interactant intactId="EBI-10696971">
        <id>Q7Z6I5</id>
    </interactant>
    <interactant intactId="EBI-948266">
        <id>O14901</id>
        <label>KLF11</label>
    </interactant>
    <organismsDiffer>false</organismsDiffer>
    <experiments>3</experiments>
</comment>
<comment type="interaction">
    <interactant intactId="EBI-10696971">
        <id>Q7Z6I5</id>
    </interactant>
    <interactant intactId="EBI-3957672">
        <id>Q6PEX3</id>
        <label>KRTAP26-1</label>
    </interactant>
    <organismsDiffer>false</organismsDiffer>
    <experiments>3</experiments>
</comment>
<comment type="interaction">
    <interactant intactId="EBI-10696971">
        <id>Q7Z6I5</id>
    </interactant>
    <interactant intactId="EBI-1189067">
        <id>P51608</id>
        <label>MECP2</label>
    </interactant>
    <organismsDiffer>false</organismsDiffer>
    <experiments>3</experiments>
</comment>
<comment type="interaction">
    <interactant intactId="EBI-10696971">
        <id>Q7Z6I5</id>
    </interactant>
    <interactant intactId="EBI-2811583">
        <id>Q9BVL2</id>
        <label>NUP58</label>
    </interactant>
    <organismsDiffer>false</organismsDiffer>
    <experiments>3</experiments>
</comment>
<comment type="interaction">
    <interactant intactId="EBI-10696971">
        <id>Q7Z6I5</id>
    </interactant>
    <interactant intactId="EBI-50433196">
        <id>A0A6Q8PF08</id>
        <label>PMP22</label>
    </interactant>
    <organismsDiffer>false</organismsDiffer>
    <experiments>3</experiments>
</comment>
<comment type="interaction">
    <interactant intactId="EBI-10696971">
        <id>Q7Z6I5</id>
    </interactant>
    <interactant intactId="EBI-1389308">
        <id>Q7Z3K3</id>
        <label>POGZ</label>
    </interactant>
    <organismsDiffer>false</organismsDiffer>
    <experiments>3</experiments>
</comment>
<comment type="interaction">
    <interactant intactId="EBI-10696971">
        <id>Q7Z6I5</id>
    </interactant>
    <interactant intactId="EBI-1053431">
        <id>P49591</id>
        <label>SARS1</label>
    </interactant>
    <organismsDiffer>false</organismsDiffer>
    <experiments>3</experiments>
</comment>
<comment type="interaction">
    <interactant intactId="EBI-10696971">
        <id>Q7Z6I5</id>
    </interactant>
    <interactant intactId="EBI-355653">
        <id>Q92922</id>
        <label>SMARCC1</label>
    </interactant>
    <organismsDiffer>false</organismsDiffer>
    <experiments>3</experiments>
</comment>
<comment type="interaction">
    <interactant intactId="EBI-10696971">
        <id>Q7Z6I5</id>
    </interactant>
    <interactant intactId="EBI-395421">
        <id>Q16637</id>
        <label>SMN2</label>
    </interactant>
    <organismsDiffer>false</organismsDiffer>
    <experiments>3</experiments>
</comment>
<comment type="interaction">
    <interactant intactId="EBI-10696971">
        <id>Q7Z6I5</id>
    </interactant>
    <interactant intactId="EBI-25847109">
        <id>O14656-2</id>
        <label>TOR1A</label>
    </interactant>
    <organismsDiffer>false</organismsDiffer>
    <experiments>3</experiments>
</comment>
<comment type="interaction">
    <interactant intactId="EBI-10696971">
        <id>Q7Z6I5</id>
    </interactant>
    <interactant intactId="EBI-741480">
        <id>Q9UMX0</id>
        <label>UBQLN1</label>
    </interactant>
    <organismsDiffer>false</organismsDiffer>
    <experiments>3</experiments>
</comment>
<comment type="interaction">
    <interactant intactId="EBI-10696971">
        <id>Q7Z6I5</id>
    </interactant>
    <interactant intactId="EBI-25900580">
        <id>Q9Y649</id>
    </interactant>
    <organismsDiffer>false</organismsDiffer>
    <experiments>3</experiments>
</comment>
<comment type="tissue specificity">
    <text evidence="1 2">Expressed in testis.</text>
</comment>
<protein>
    <recommendedName>
        <fullName>Spermatogenesis-associated protein 12</fullName>
    </recommendedName>
    <alternativeName>
        <fullName>Spermatogenesis-related protein 5</fullName>
    </alternativeName>
</protein>
<evidence type="ECO:0000269" key="1">
    <source>
    </source>
</evidence>
<evidence type="ECO:0000269" key="2">
    <source>
    </source>
</evidence>
<gene>
    <name type="primary">SPATA12</name>
    <name type="synonym">SRG5</name>
</gene>
<sequence length="190" mass="20418">MSSSALTCGSTLEKSGDTWEMKALDSSRLVPWPPRGLGSSTQHPNKPHCALASCQGPGVLPGAASALPELTFQGDVCQSETCQRYLQAAISLDIAVSQINLLGRPSSPPALLIQQGSCEQVIHNSTPQFLGMEDGDNERTTGWLWRLCEDIDAEPSSTGCSRSNQLTFTEGCFVRSLSTVYSNTHIHTHL</sequence>
<name>SPT12_HUMAN</name>
<feature type="chain" id="PRO_0000251198" description="Spermatogenesis-associated protein 12">
    <location>
        <begin position="1"/>
        <end position="190"/>
    </location>
</feature>
<reference key="1">
    <citation type="journal article" date="2004" name="Chin. Med. J.">
        <title>Identification and expression of a novel human testis-specific gene by digital differential display.</title>
        <authorList>
            <person name="Li D."/>
            <person name="Lu G.X."/>
        </authorList>
    </citation>
    <scope>NUCLEOTIDE SEQUENCE [MRNA]</scope>
    <scope>TISSUE SPECIFICITY</scope>
    <source>
        <tissue>Testis</tissue>
    </source>
</reference>
<reference key="2">
    <citation type="journal article" date="2004" name="Yi Chuan Xue Bao">
        <title>Molecular cloning and expression analysis of a novel human testis-specific gene.</title>
        <authorList>
            <person name="Li D."/>
            <person name="Lu G.X."/>
            <person name="Fu J.J."/>
            <person name="Mo Y.Q."/>
            <person name="Xing X.W."/>
            <person name="Liu G."/>
        </authorList>
    </citation>
    <scope>NUCLEOTIDE SEQUENCE [MRNA]</scope>
    <scope>TISSUE SPECIFICITY</scope>
    <source>
        <tissue>Testis</tissue>
    </source>
</reference>
<reference key="3">
    <citation type="journal article" date="2004" name="Genome Res.">
        <title>The status, quality, and expansion of the NIH full-length cDNA project: the Mammalian Gene Collection (MGC).</title>
        <authorList>
            <consortium name="The MGC Project Team"/>
        </authorList>
    </citation>
    <scope>NUCLEOTIDE SEQUENCE [LARGE SCALE MRNA]</scope>
</reference>
<organism>
    <name type="scientific">Homo sapiens</name>
    <name type="common">Human</name>
    <dbReference type="NCBI Taxonomy" id="9606"/>
    <lineage>
        <taxon>Eukaryota</taxon>
        <taxon>Metazoa</taxon>
        <taxon>Chordata</taxon>
        <taxon>Craniata</taxon>
        <taxon>Vertebrata</taxon>
        <taxon>Euteleostomi</taxon>
        <taxon>Mammalia</taxon>
        <taxon>Eutheria</taxon>
        <taxon>Euarchontoglires</taxon>
        <taxon>Primates</taxon>
        <taxon>Haplorrhini</taxon>
        <taxon>Catarrhini</taxon>
        <taxon>Hominidae</taxon>
        <taxon>Homo</taxon>
    </lineage>
</organism>
<dbReference type="EMBL" id="AY221117">
    <property type="protein sequence ID" value="AAP50852.1"/>
    <property type="molecule type" value="mRNA"/>
</dbReference>
<dbReference type="EMBL" id="BC126274">
    <property type="protein sequence ID" value="AAI26275.1"/>
    <property type="molecule type" value="mRNA"/>
</dbReference>
<dbReference type="EMBL" id="BC136498">
    <property type="protein sequence ID" value="AAI36499.1"/>
    <property type="molecule type" value="mRNA"/>
</dbReference>
<dbReference type="CCDS" id="CCDS2879.1"/>
<dbReference type="RefSeq" id="NP_859078.1">
    <property type="nucleotide sequence ID" value="NM_181727.2"/>
</dbReference>
<dbReference type="RefSeq" id="XP_011531978.1">
    <property type="nucleotide sequence ID" value="XM_011533676.2"/>
</dbReference>
<dbReference type="BioGRID" id="131685">
    <property type="interactions" value="11"/>
</dbReference>
<dbReference type="FunCoup" id="Q7Z6I5">
    <property type="interactions" value="1"/>
</dbReference>
<dbReference type="IntAct" id="Q7Z6I5">
    <property type="interactions" value="35"/>
</dbReference>
<dbReference type="STRING" id="9606.ENSP00000335392"/>
<dbReference type="BioMuta" id="SPATA12"/>
<dbReference type="MassIVE" id="Q7Z6I5"/>
<dbReference type="PaxDb" id="9606-ENSP00000335392"/>
<dbReference type="Antibodypedia" id="31514">
    <property type="antibodies" value="30 antibodies from 14 providers"/>
</dbReference>
<dbReference type="DNASU" id="353324"/>
<dbReference type="Ensembl" id="ENST00000334325.2">
    <property type="protein sequence ID" value="ENSP00000335392.1"/>
    <property type="gene ID" value="ENSG00000186451.2"/>
</dbReference>
<dbReference type="GeneID" id="353324"/>
<dbReference type="KEGG" id="hsa:353324"/>
<dbReference type="MANE-Select" id="ENST00000334325.2">
    <property type="protein sequence ID" value="ENSP00000335392.1"/>
    <property type="RefSeq nucleotide sequence ID" value="NM_181727.2"/>
    <property type="RefSeq protein sequence ID" value="NP_859078.1"/>
</dbReference>
<dbReference type="UCSC" id="uc003dij.1">
    <property type="organism name" value="human"/>
</dbReference>
<dbReference type="AGR" id="HGNC:23221"/>
<dbReference type="CTD" id="353324"/>
<dbReference type="GeneCards" id="SPATA12"/>
<dbReference type="HGNC" id="HGNC:23221">
    <property type="gene designation" value="SPATA12"/>
</dbReference>
<dbReference type="HPA" id="ENSG00000186451">
    <property type="expression patterns" value="Tissue enriched (testis)"/>
</dbReference>
<dbReference type="MIM" id="609869">
    <property type="type" value="gene"/>
</dbReference>
<dbReference type="neXtProt" id="NX_Q7Z6I5"/>
<dbReference type="OpenTargets" id="ENSG00000186451"/>
<dbReference type="PharmGKB" id="PA134888733"/>
<dbReference type="VEuPathDB" id="HostDB:ENSG00000186451"/>
<dbReference type="eggNOG" id="ENOG502TEHX">
    <property type="taxonomic scope" value="Eukaryota"/>
</dbReference>
<dbReference type="GeneTree" id="ENSGT00390000008817"/>
<dbReference type="HOGENOM" id="CLU_1427572_0_0_1"/>
<dbReference type="InParanoid" id="Q7Z6I5"/>
<dbReference type="OMA" id="QFPGMED"/>
<dbReference type="OrthoDB" id="9750212at2759"/>
<dbReference type="PAN-GO" id="Q7Z6I5">
    <property type="GO annotations" value="0 GO annotations based on evolutionary models"/>
</dbReference>
<dbReference type="PhylomeDB" id="Q7Z6I5"/>
<dbReference type="TreeFam" id="TF342116"/>
<dbReference type="PathwayCommons" id="Q7Z6I5"/>
<dbReference type="SignaLink" id="Q7Z6I5"/>
<dbReference type="BioGRID-ORCS" id="353324">
    <property type="hits" value="7 hits in 1140 CRISPR screens"/>
</dbReference>
<dbReference type="GenomeRNAi" id="353324"/>
<dbReference type="Pharos" id="Q7Z6I5">
    <property type="development level" value="Tbio"/>
</dbReference>
<dbReference type="PRO" id="PR:Q7Z6I5"/>
<dbReference type="Proteomes" id="UP000005640">
    <property type="component" value="Chromosome 3"/>
</dbReference>
<dbReference type="RNAct" id="Q7Z6I5">
    <property type="molecule type" value="protein"/>
</dbReference>
<dbReference type="Bgee" id="ENSG00000186451">
    <property type="expression patterns" value="Expressed in sperm and 54 other cell types or tissues"/>
</dbReference>
<dbReference type="ExpressionAtlas" id="Q7Z6I5">
    <property type="expression patterns" value="baseline and differential"/>
</dbReference>
<proteinExistence type="evidence at protein level"/>